<accession>A9QT41</accession>
<accession>F1RZ22</accession>
<accession>K7GSV8</accession>
<evidence type="ECO:0000250" key="1">
    <source>
        <dbReference type="UniProtKB" id="O88522"/>
    </source>
</evidence>
<evidence type="ECO:0000250" key="2">
    <source>
        <dbReference type="UniProtKB" id="Q9Y6K9"/>
    </source>
</evidence>
<evidence type="ECO:0000255" key="3"/>
<evidence type="ECO:0000255" key="4">
    <source>
        <dbReference type="PROSITE-ProRule" id="PRU01142"/>
    </source>
</evidence>
<evidence type="ECO:0000256" key="5">
    <source>
        <dbReference type="SAM" id="MobiDB-lite"/>
    </source>
</evidence>
<evidence type="ECO:0000269" key="6">
    <source>
    </source>
</evidence>
<feature type="chain" id="PRO_0000445606" description="NF-kappa-B essential modulator">
    <location>
        <begin position="1"/>
        <end position="419"/>
    </location>
</feature>
<feature type="zinc finger region" description="CCHC NOA-type" evidence="4">
    <location>
        <begin position="389"/>
        <end position="419"/>
    </location>
</feature>
<feature type="region of interest" description="Required for interaction with and ubiquitination by MARCHF2" evidence="2">
    <location>
        <begin position="1"/>
        <end position="197"/>
    </location>
</feature>
<feature type="region of interest" description="Disordered" evidence="5">
    <location>
        <begin position="1"/>
        <end position="46"/>
    </location>
</feature>
<feature type="region of interest" description="Interaction with CHUK/IKBKB" evidence="2">
    <location>
        <begin position="44"/>
        <end position="111"/>
    </location>
</feature>
<feature type="region of interest" description="Interaction with TANK" evidence="2">
    <location>
        <begin position="150"/>
        <end position="257"/>
    </location>
</feature>
<feature type="region of interest" description="Ubiquitin-binding (UBAN)" evidence="2">
    <location>
        <begin position="242"/>
        <end position="350"/>
    </location>
</feature>
<feature type="region of interest" description="Self-association" evidence="2">
    <location>
        <begin position="246"/>
        <end position="365"/>
    </location>
</feature>
<feature type="region of interest" description="Required for interaction with TNFAIP3" evidence="2">
    <location>
        <begin position="251"/>
        <end position="419"/>
    </location>
</feature>
<feature type="region of interest" description="Leucine-zipper" evidence="3">
    <location>
        <begin position="322"/>
        <end position="343"/>
    </location>
</feature>
<feature type="region of interest" description="Disordered" evidence="5">
    <location>
        <begin position="363"/>
        <end position="394"/>
    </location>
</feature>
<feature type="region of interest" description="Interaction with CYLD" evidence="2">
    <location>
        <begin position="382"/>
        <end position="419"/>
    </location>
</feature>
<feature type="coiled-coil region" evidence="3">
    <location>
        <begin position="100"/>
        <end position="353"/>
    </location>
</feature>
<feature type="binding site" evidence="4">
    <location>
        <position position="397"/>
    </location>
    <ligand>
        <name>Zn(2+)</name>
        <dbReference type="ChEBI" id="CHEBI:29105"/>
    </ligand>
</feature>
<feature type="binding site" evidence="4">
    <location>
        <position position="400"/>
    </location>
    <ligand>
        <name>Zn(2+)</name>
        <dbReference type="ChEBI" id="CHEBI:29105"/>
    </ligand>
</feature>
<feature type="binding site" evidence="4">
    <location>
        <position position="413"/>
    </location>
    <ligand>
        <name>Zn(2+)</name>
        <dbReference type="ChEBI" id="CHEBI:29105"/>
    </ligand>
</feature>
<feature type="binding site" evidence="4">
    <location>
        <position position="417"/>
    </location>
    <ligand>
        <name>Zn(2+)</name>
        <dbReference type="ChEBI" id="CHEBI:29105"/>
    </ligand>
</feature>
<feature type="site" description="(Microbial infection) Cleavage; by porcine reproductive and respiratory syndrome virus serine protease nsp4" evidence="6">
    <location>
        <begin position="349"/>
        <end position="350"/>
    </location>
</feature>
<feature type="modified residue" description="Phosphoserine" evidence="2">
    <location>
        <position position="31"/>
    </location>
</feature>
<feature type="modified residue" description="Phosphoserine" evidence="2">
    <location>
        <position position="43"/>
    </location>
</feature>
<feature type="modified residue" description="Phosphoserine" evidence="2">
    <location>
        <position position="68"/>
    </location>
</feature>
<feature type="modified residue" description="Phosphoserine" evidence="2">
    <location>
        <position position="85"/>
    </location>
</feature>
<feature type="modified residue" description="Phosphoserine" evidence="2">
    <location>
        <position position="376"/>
    </location>
</feature>
<feature type="modified residue" description="Phosphoserine" evidence="2">
    <location>
        <position position="387"/>
    </location>
</feature>
<feature type="disulfide bond" description="Interchain" evidence="2">
    <location>
        <position position="54"/>
    </location>
</feature>
<feature type="disulfide bond" description="Interchain" evidence="2">
    <location>
        <position position="347"/>
    </location>
</feature>
<feature type="cross-link" description="Glycyl lysine isopeptide (Lys-Gly) (interchain with G-Cter in ubiquitin)" evidence="2">
    <location>
        <position position="111"/>
    </location>
</feature>
<feature type="cross-link" description="Glycyl lysine isopeptide (Lys-Gly) (interchain with G-Cter in ubiquitin)" evidence="2">
    <location>
        <position position="139"/>
    </location>
</feature>
<feature type="cross-link" description="Glycyl lysine isopeptide (Lys-Gly) (interchain with G-Cter in ubiquitin)" evidence="2">
    <location>
        <position position="143"/>
    </location>
</feature>
<feature type="cross-link" description="Glycyl lysine isopeptide (Lys-Gly) (interchain with G-Cter in ubiquitin)" evidence="2">
    <location>
        <position position="226"/>
    </location>
</feature>
<feature type="cross-link" description="Glycyl lysine isopeptide (Lys-Gly) (interchain with G-Cter in ubiquitin)" evidence="2">
    <location>
        <position position="246"/>
    </location>
</feature>
<feature type="cross-link" description="Glycyl lysine isopeptide (Lys-Gly) (interchain with G-Cter in ubiquitin)" evidence="2">
    <location>
        <position position="264"/>
    </location>
</feature>
<feature type="cross-link" description="Glycyl lysine isopeptide (Lys-Gly) (interchain with G-Cter in SUMO); alternate" evidence="2">
    <location>
        <position position="277"/>
    </location>
</feature>
<feature type="cross-link" description="Glycyl lysine isopeptide (Lys-Gly) (interchain with G-Cter in ubiquitin); alternate" evidence="2">
    <location>
        <position position="277"/>
    </location>
</feature>
<feature type="cross-link" description="Glycyl lysine isopeptide (Lys-Gly) (interchain with G-Cter in ubiquitin)" evidence="2">
    <location>
        <position position="283"/>
    </location>
</feature>
<feature type="cross-link" description="Glycyl lysine isopeptide (Lys-Gly) (interchain with G-Cter in ubiquitin)" evidence="2">
    <location>
        <position position="285"/>
    </location>
</feature>
<feature type="cross-link" description="Glycyl lysine isopeptide (Lys-Gly) (interchain with G-Cter in ubiquitin)" evidence="2">
    <location>
        <position position="292"/>
    </location>
</feature>
<feature type="cross-link" description="Glycyl lysine isopeptide (Lys-Gly) (interchain with G-Cter in ubiquitin)" evidence="2">
    <location>
        <position position="302"/>
    </location>
</feature>
<feature type="cross-link" description="Glycyl lysine isopeptide (Lys-Gly) (interchain with G-Cter in SUMO); alternate" evidence="2">
    <location>
        <position position="309"/>
    </location>
</feature>
<feature type="cross-link" description="Glycyl lysine isopeptide (Lys-Gly) (interchain with G-Cter in ubiquitin); alternate" evidence="2">
    <location>
        <position position="309"/>
    </location>
</feature>
<feature type="cross-link" description="Glycyl lysine isopeptide (Lys-Gly) (interchain with G-Cter in ubiquitin)" evidence="2">
    <location>
        <position position="326"/>
    </location>
</feature>
<feature type="cross-link" description="Glycyl lysine isopeptide (Lys-Gly) (interchain with G-Cter in ubiquitin)" evidence="2">
    <location>
        <position position="399"/>
    </location>
</feature>
<reference key="1">
    <citation type="submission" date="2007-11" db="EMBL/GenBank/DDBJ databases">
        <authorList>
            <person name="Fang Y."/>
            <person name="Wang D."/>
            <person name="Li T."/>
            <person name="Xiao S."/>
            <person name="Fang L."/>
        </authorList>
    </citation>
    <scope>NUCLEOTIDE SEQUENCE [MRNA]</scope>
</reference>
<reference key="2">
    <citation type="submission" date="2009-11" db="EMBL/GenBank/DDBJ databases">
        <authorList>
            <consortium name="Porcine genome sequencing project"/>
        </authorList>
    </citation>
    <scope>NUCLEOTIDE SEQUENCE [LARGE SCALE GENOMIC DNA]</scope>
</reference>
<reference key="3">
    <citation type="journal article" date="2014" name="J. Virol.">
        <title>Porcine reproductive and respiratory syndrome virus nonstructural protein 4 antagonizes beta interferon expression by targeting the NF-kappaB essential modulator.</title>
        <authorList>
            <person name="Huang C."/>
            <person name="Zhang Q."/>
            <person name="Guo X.K."/>
            <person name="Yu Z.B."/>
            <person name="Xu A.T."/>
            <person name="Tang J."/>
            <person name="Feng W.H."/>
        </authorList>
    </citation>
    <scope>CLEAVAGE BY PORCINE REPRODUCTIVE AND RESPIRATORY SYNDROME VIRUS SERINE PROTEASE NSP4 AT GLU-349 (MICROBIAL INFECTION)</scope>
</reference>
<gene>
    <name type="primary">IKBKG</name>
</gene>
<comment type="function">
    <text evidence="2">Regulatory subunit of the IKK core complex which phosphorylates inhibitors of NF-kappa-B thus leading to the dissociation of the inhibitor/NF-kappa-B complex and ultimately the degradation of the inhibitor. Its binding to scaffolding polyubiquitin plays a key role in IKK activation by multiple signaling receptor pathways. Can recognize and bind both 'Lys-63'-linked and linear polyubiquitin upon cell stimulation, with a much highr affinity for linear polyubiquitin. Could be implicated in NF-kappa-B-mediated protection from cytokine toxicity. Essential for viral activation of IRF3. Involved in TLR3- and IFIH1-mediated antiviral innate response; this function requires 'Lys-27'-linked polyubiquitination.</text>
</comment>
<comment type="subunit">
    <text evidence="1 2">Homodimer; disulfide-linked. Component of the I-kappa-B-kinase (IKK) core complex consisting of CHUK, IKBKB and IKBKG; probably four alpha/CHUK-beta/IKBKB dimers are associated with four gamma/IKBKG subunits. The IKK core complex seems to associate with regulatory or adapter proteins to form a IKK-signalosome holo-complex (By similarity). The IKK complex associates with TERF2IP/RAP1, leading to promote IKK-mediated phosphorylation of RELA/p65 (By similarity). Part of a complex composed of NCOA2, NCOA3, CHUK/IKKA, IKBKB, IKBKG and CREBBP. Interacts with COPS3, CYLD, NALP2, TRPC4AP and PIDD1. Interacts with ATM; the complex is exported from the nucleus. Interacts with TRAF6. Interacts with IKBKE. Interacts with TANK; the interaction is enhanced by IKBKE and TBK1. Part of a ternary complex consisting of TANK, IKBKB and IKBKG. Interacts with ZFAND5. Interacts with RIPK2. Interacts with TNIP1 and TNFAIP3; TNIP1 facilitates the TNFAIP3-mediated de-ubiquitination of IKBKG. Interacts with TNFAIP3; the interaction is induced by TNF stimulation and by polyubiquitin. Binds (via UBAN region) polyubiquitin; binds both 'Lys-63'-linked and linear polyubiquitin, with higher affinity for linear ubiquitin. Interacts with NLRP10. Interacts with TANK; this interaction increases in response to DNA damage. Interacts with USP10; this interaction increases in response to DNA damage. Interacts with ZC3H12A; this interaction increases in response to DNA damage. Interacts with IFIT5; the interaction synergizes the recruitment of IKK to MAP3K7 and enhances IKK phosphorylation. Interacts with TRIM29; this interaction induces IKBKG/NEMO ubiquitination and proteolytic degradation. Interacts with TRIM13; this interaction leads to IKBKG/NEMO ubiquitination. Interacts with ARFIP2 (By similarity). Interacts with RIPK1 (By similarity). Interacts with (ubiquitinated) BCL10; interaction with polyubiquitinated BCL10 via both 'Lys-63'-linked and linear ubiquitin is required for TCR-induced NF-kappa-B activation (By similarity). Interacts with MARCHF2; during the late stages of macrophage viral and bacterial infection; the interaction leads to ubiquitination and degradation of IKBKG/NEMO (By similarity).</text>
</comment>
<comment type="subcellular location">
    <subcellularLocation>
        <location evidence="2">Cytoplasm</location>
    </subcellularLocation>
    <subcellularLocation>
        <location evidence="2">Nucleus</location>
    </subcellularLocation>
    <text evidence="2">Sumoylated NEMO accumulates in the nucleus in response to genotoxic stress.</text>
</comment>
<comment type="domain">
    <text evidence="2">The leucine-zipper domain and the CCHC NOA-type zinc-fingers constitute the UBAN region and are essential for polyubiquitin binding and for the activation of IRF3.</text>
</comment>
<comment type="PTM">
    <text evidence="2">Phosphorylation at Ser-68 attenuates aminoterminal homodimerization.</text>
</comment>
<comment type="PTM">
    <text evidence="2">Polyubiquitinated on Lys-285 via 'Lys-63'-linked ubiquitin; the ubiquitination is mediated downstream of NOD2 and RIPK2 and probably plays a role in signaling by facilitating interactions with ubiquitin domain-containing proteins and activates the NF-kappa-B pathway. Polyubiquitinated on Lys-285 and Lys-399 through 'Lys-63'-linked ubiquitin; the ubiquitination is mediated by BCL10, MALT1 and TRAF6 and probably plays a role in signaling by facilitating interactions with ubiquitin domain-containing proteins and activates the NF-kappa-B pathway. Monoubiquitinated on Lys-277 and Lys-309; promotes nuclear export. Polyubiquitinated through 'Lys-27' by TRIM23; involved in antiviral innate and inflammatory responses. Linear polyubiquitinated on Lys-111, Lys-143, Lys-226, Lys-246, Lys-264, Lys-277, Lys-285, Lys-292, Lys-302, Lys-309 and Lys-326; the head-to-tail polyubiquitination is mediated by the LUBAC complex and plays a key role in NF-kappa-B activation. Deubiquitinated by USP10 in a TANK-dependent and -independent manner, leading to the negative regulation of NF-kappa-B signaling upon DNA damage. Ubiquitinated at Lys-326 by MARCHF2 following bacterial and viral infection which leads to its degradation.</text>
</comment>
<comment type="PTM">
    <text evidence="2">Sumoylated on Lys-277 and Lys-309 with SUMO1; the modification results in phosphorylation of Ser-85 by ATM leading to a replacement of the sumoylation by mono-ubiquitination on these residues.</text>
</comment>
<comment type="PTM">
    <text evidence="2">Neddylated by TRIM40, resulting in stabilization of NFKBIA and down-regulation of NF-kappa-B activity.</text>
</comment>
<comment type="PTM">
    <text evidence="6">(Microbial infection) Cleaved by porcine reproductive and respiratory syndrome virus serine protease nsp4 after Glu-349. The cleavage inhibits NEMO proper function.</text>
</comment>
<name>NEMO_PIG</name>
<dbReference type="EMBL" id="AEMK02000122">
    <property type="status" value="NOT_ANNOTATED_CDS"/>
    <property type="molecule type" value="Genomic_DNA"/>
</dbReference>
<dbReference type="EMBL" id="EU258760">
    <property type="protein sequence ID" value="ABX57883.1"/>
    <property type="molecule type" value="mRNA"/>
</dbReference>
<dbReference type="RefSeq" id="NP_001106524.1">
    <property type="nucleotide sequence ID" value="NM_001113053.1"/>
</dbReference>
<dbReference type="RefSeq" id="XP_005674095.1">
    <property type="nucleotide sequence ID" value="XM_005674038.2"/>
</dbReference>
<dbReference type="RefSeq" id="XP_005674097.1">
    <property type="nucleotide sequence ID" value="XM_005674040.3"/>
</dbReference>
<dbReference type="RefSeq" id="XP_013842025.1">
    <property type="nucleotide sequence ID" value="XM_013986571.2"/>
</dbReference>
<dbReference type="RefSeq" id="XP_020935029.1">
    <property type="nucleotide sequence ID" value="XM_021079370.1"/>
</dbReference>
<dbReference type="SMR" id="A9QT41"/>
<dbReference type="FunCoup" id="A9QT41">
    <property type="interactions" value="1247"/>
</dbReference>
<dbReference type="STRING" id="9823.ENSSSCP00000048392"/>
<dbReference type="PaxDb" id="9823-ENSSSCP00000031038"/>
<dbReference type="Ensembl" id="ENSSSCT00000048167.2">
    <property type="protein sequence ID" value="ENSSSCP00000059040.1"/>
    <property type="gene ID" value="ENSSSCG00000012825.6"/>
</dbReference>
<dbReference type="Ensembl" id="ENSSSCT00015037010.1">
    <property type="protein sequence ID" value="ENSSSCP00015014717.1"/>
    <property type="gene ID" value="ENSSSCG00015027234.1"/>
</dbReference>
<dbReference type="Ensembl" id="ENSSSCT00025017296.1">
    <property type="protein sequence ID" value="ENSSSCP00025006922.1"/>
    <property type="gene ID" value="ENSSSCG00025012844.1"/>
</dbReference>
<dbReference type="Ensembl" id="ENSSSCT00030095898.1">
    <property type="protein sequence ID" value="ENSSSCP00030044189.1"/>
    <property type="gene ID" value="ENSSSCG00030068530.1"/>
</dbReference>
<dbReference type="Ensembl" id="ENSSSCT00035059651.1">
    <property type="protein sequence ID" value="ENSSSCP00035023987.1"/>
    <property type="gene ID" value="ENSSSCG00035044882.1"/>
</dbReference>
<dbReference type="Ensembl" id="ENSSSCT00040068051.1">
    <property type="protein sequence ID" value="ENSSSCP00040028929.1"/>
    <property type="gene ID" value="ENSSSCG00040050271.1"/>
</dbReference>
<dbReference type="Ensembl" id="ENSSSCT00045064285.1">
    <property type="protein sequence ID" value="ENSSSCP00045045401.1"/>
    <property type="gene ID" value="ENSSSCG00045037264.1"/>
</dbReference>
<dbReference type="Ensembl" id="ENSSSCT00050058363.1">
    <property type="protein sequence ID" value="ENSSSCP00050024992.1"/>
    <property type="gene ID" value="ENSSSCG00050042920.1"/>
</dbReference>
<dbReference type="Ensembl" id="ENSSSCT00055014307.1">
    <property type="protein sequence ID" value="ENSSSCP00055011250.1"/>
    <property type="gene ID" value="ENSSSCG00055007278.1"/>
</dbReference>
<dbReference type="Ensembl" id="ENSSSCT00060011074.1">
    <property type="protein sequence ID" value="ENSSSCP00060004090.1"/>
    <property type="gene ID" value="ENSSSCG00060008639.1"/>
</dbReference>
<dbReference type="Ensembl" id="ENSSSCT00065008059.1">
    <property type="protein sequence ID" value="ENSSSCP00065003382.1"/>
    <property type="gene ID" value="ENSSSCG00065005991.1"/>
</dbReference>
<dbReference type="Ensembl" id="ENSSSCT00105037720">
    <property type="protein sequence ID" value="ENSSSCP00105026206"/>
    <property type="gene ID" value="ENSSSCG00105019646"/>
</dbReference>
<dbReference type="Ensembl" id="ENSSSCT00115002652">
    <property type="protein sequence ID" value="ENSSSCP00115002471"/>
    <property type="gene ID" value="ENSSSCG00115001537"/>
</dbReference>
<dbReference type="GeneID" id="100127355"/>
<dbReference type="KEGG" id="ssc:100127355"/>
<dbReference type="CTD" id="8517"/>
<dbReference type="VGNC" id="VGNC:89072">
    <property type="gene designation" value="IKBKG"/>
</dbReference>
<dbReference type="eggNOG" id="ENOG502R4ZD">
    <property type="taxonomic scope" value="Eukaryota"/>
</dbReference>
<dbReference type="GeneTree" id="ENSGT00530000063808"/>
<dbReference type="InParanoid" id="A9QT41"/>
<dbReference type="OMA" id="VAMRKNF"/>
<dbReference type="OrthoDB" id="6343844at2759"/>
<dbReference type="TreeFam" id="TF326608"/>
<dbReference type="Reactome" id="R-SSC-1169091">
    <property type="pathway name" value="Activation of NF-kappaB in B cells"/>
</dbReference>
<dbReference type="Reactome" id="R-SSC-168638">
    <property type="pathway name" value="NOD1/2 Signaling Pathway"/>
</dbReference>
<dbReference type="Reactome" id="R-SSC-1810476">
    <property type="pathway name" value="RIP-mediated NFkB activation via ZBP1"/>
</dbReference>
<dbReference type="Reactome" id="R-SSC-202424">
    <property type="pathway name" value="Downstream TCR signaling"/>
</dbReference>
<dbReference type="Reactome" id="R-SSC-2871837">
    <property type="pathway name" value="FCERI mediated NF-kB activation"/>
</dbReference>
<dbReference type="Reactome" id="R-SSC-445989">
    <property type="pathway name" value="TAK1-dependent IKK and NF-kappa-B activation"/>
</dbReference>
<dbReference type="Reactome" id="R-SSC-450302">
    <property type="pathway name" value="activated TAK1 mediates p38 MAPK activation"/>
</dbReference>
<dbReference type="Reactome" id="R-SSC-450321">
    <property type="pathway name" value="JNK (c-Jun kinases) phosphorylation and activation mediated by activated human TAK1"/>
</dbReference>
<dbReference type="Reactome" id="R-SSC-4755510">
    <property type="pathway name" value="SUMOylation of immune response proteins"/>
</dbReference>
<dbReference type="Reactome" id="R-SSC-5357905">
    <property type="pathway name" value="Regulation of TNFR1 signaling"/>
</dbReference>
<dbReference type="Reactome" id="R-SSC-5357956">
    <property type="pathway name" value="TNFR1-induced NF-kappa-B signaling pathway"/>
</dbReference>
<dbReference type="Reactome" id="R-SSC-5607764">
    <property type="pathway name" value="CLEC7A (Dectin-1) signaling"/>
</dbReference>
<dbReference type="Reactome" id="R-SSC-5684264">
    <property type="pathway name" value="MAP3K8 (TPL2)-dependent MAPK1/3 activation"/>
</dbReference>
<dbReference type="Reactome" id="R-SSC-5689880">
    <property type="pathway name" value="Ub-specific processing proteases"/>
</dbReference>
<dbReference type="Reactome" id="R-SSC-9020702">
    <property type="pathway name" value="Interleukin-1 signaling"/>
</dbReference>
<dbReference type="Reactome" id="R-SSC-933542">
    <property type="pathway name" value="TRAF6 mediated NF-kB activation"/>
</dbReference>
<dbReference type="Reactome" id="R-SSC-937039">
    <property type="pathway name" value="IRAK1 recruits IKK complex"/>
</dbReference>
<dbReference type="Reactome" id="R-SSC-937041">
    <property type="pathway name" value="IKK complex recruitment mediated by RIP1"/>
</dbReference>
<dbReference type="Reactome" id="R-SSC-975144">
    <property type="pathway name" value="IRAK1 recruits IKK complex upon TLR7/8 or 9 stimulation"/>
</dbReference>
<dbReference type="Reactome" id="R-SSC-9758274">
    <property type="pathway name" value="Regulation of NF-kappa B signaling"/>
</dbReference>
<dbReference type="Reactome" id="R-SSC-9833482">
    <property type="pathway name" value="PKR-mediated signaling"/>
</dbReference>
<dbReference type="Reactome" id="R-SSC-9860276">
    <property type="pathway name" value="SLC15A4:TASL-dependent IRF5 activation"/>
</dbReference>
<dbReference type="Reactome" id="R-SSC-9860927">
    <property type="pathway name" value="Turbulent (oscillatory, disturbed) flow shear stress activates signaling by PIEZO1 and integrins in endothelial cells"/>
</dbReference>
<dbReference type="Reactome" id="R-SSC-9909505">
    <property type="pathway name" value="Modulation of host responses by IFN-stimulated genes"/>
</dbReference>
<dbReference type="Proteomes" id="UP000008227">
    <property type="component" value="Chromosome X"/>
</dbReference>
<dbReference type="Proteomes" id="UP000314985">
    <property type="component" value="Unplaced"/>
</dbReference>
<dbReference type="Proteomes" id="UP000694570">
    <property type="component" value="Unplaced"/>
</dbReference>
<dbReference type="Proteomes" id="UP000694571">
    <property type="component" value="Unplaced"/>
</dbReference>
<dbReference type="Proteomes" id="UP000694720">
    <property type="component" value="Unplaced"/>
</dbReference>
<dbReference type="Proteomes" id="UP000694722">
    <property type="component" value="Unplaced"/>
</dbReference>
<dbReference type="Proteomes" id="UP000694723">
    <property type="component" value="Unplaced"/>
</dbReference>
<dbReference type="Proteomes" id="UP000694724">
    <property type="component" value="Unplaced"/>
</dbReference>
<dbReference type="Proteomes" id="UP000694725">
    <property type="component" value="Unplaced"/>
</dbReference>
<dbReference type="Proteomes" id="UP000694726">
    <property type="component" value="Unplaced"/>
</dbReference>
<dbReference type="Proteomes" id="UP000694727">
    <property type="component" value="Unplaced"/>
</dbReference>
<dbReference type="Proteomes" id="UP000694728">
    <property type="component" value="Unplaced"/>
</dbReference>
<dbReference type="Bgee" id="ENSSSCG00000012825">
    <property type="expression patterns" value="Expressed in blood and 45 other cell types or tissues"/>
</dbReference>
<dbReference type="ExpressionAtlas" id="A9QT41">
    <property type="expression patterns" value="baseline and differential"/>
</dbReference>
<dbReference type="GO" id="GO:0005737">
    <property type="term" value="C:cytoplasm"/>
    <property type="evidence" value="ECO:0000318"/>
    <property type="project" value="GO_Central"/>
</dbReference>
<dbReference type="GO" id="GO:0008385">
    <property type="term" value="C:IkappaB kinase complex"/>
    <property type="evidence" value="ECO:0000318"/>
    <property type="project" value="GO_Central"/>
</dbReference>
<dbReference type="GO" id="GO:0005634">
    <property type="term" value="C:nucleus"/>
    <property type="evidence" value="ECO:0000318"/>
    <property type="project" value="GO_Central"/>
</dbReference>
<dbReference type="GO" id="GO:0070530">
    <property type="term" value="F:K63-linked polyubiquitin modification-dependent protein binding"/>
    <property type="evidence" value="ECO:0000250"/>
    <property type="project" value="UniProtKB"/>
</dbReference>
<dbReference type="GO" id="GO:0016301">
    <property type="term" value="F:kinase activity"/>
    <property type="evidence" value="ECO:0007669"/>
    <property type="project" value="UniProtKB-KW"/>
</dbReference>
<dbReference type="GO" id="GO:1990450">
    <property type="term" value="F:linear polyubiquitin binding"/>
    <property type="evidence" value="ECO:0000250"/>
    <property type="project" value="UniProtKB"/>
</dbReference>
<dbReference type="GO" id="GO:0008270">
    <property type="term" value="F:zinc ion binding"/>
    <property type="evidence" value="ECO:0007669"/>
    <property type="project" value="UniProtKB-KW"/>
</dbReference>
<dbReference type="GO" id="GO:0006974">
    <property type="term" value="P:DNA damage response"/>
    <property type="evidence" value="ECO:0007669"/>
    <property type="project" value="UniProtKB-KW"/>
</dbReference>
<dbReference type="GO" id="GO:0043123">
    <property type="term" value="P:positive regulation of canonical NF-kappaB signal transduction"/>
    <property type="evidence" value="ECO:0000250"/>
    <property type="project" value="UniProtKB"/>
</dbReference>
<dbReference type="GO" id="GO:0051092">
    <property type="term" value="P:positive regulation of NF-kappaB transcription factor activity"/>
    <property type="evidence" value="ECO:0000250"/>
    <property type="project" value="UniProtKB"/>
</dbReference>
<dbReference type="GO" id="GO:0050862">
    <property type="term" value="P:positive regulation of T cell receptor signaling pathway"/>
    <property type="evidence" value="ECO:0000250"/>
    <property type="project" value="UniProtKB"/>
</dbReference>
<dbReference type="FunFam" id="1.20.5.390:FF:000002">
    <property type="entry name" value="NF-kappa-B essential modulator isoform X1"/>
    <property type="match status" value="1"/>
</dbReference>
<dbReference type="FunFam" id="1.20.5.390:FF:000003">
    <property type="entry name" value="NF-kappa-B essential modulator isoform X1"/>
    <property type="match status" value="1"/>
</dbReference>
<dbReference type="FunFam" id="1.20.5.990:FF:000003">
    <property type="entry name" value="NF-kappa-B essential modulator isoform X1"/>
    <property type="match status" value="1"/>
</dbReference>
<dbReference type="Gene3D" id="1.20.5.390">
    <property type="entry name" value="L1 transposable element, trimerization domain"/>
    <property type="match status" value="2"/>
</dbReference>
<dbReference type="Gene3D" id="1.20.5.990">
    <property type="entry name" value="Nemo cc2-lz domain - 1d5 darpin complex"/>
    <property type="match status" value="1"/>
</dbReference>
<dbReference type="InterPro" id="IPR032419">
    <property type="entry name" value="CC2-LZ_dom"/>
</dbReference>
<dbReference type="InterPro" id="IPR021063">
    <property type="entry name" value="NEMO_N"/>
</dbReference>
<dbReference type="InterPro" id="IPR034735">
    <property type="entry name" value="NEMO_ZF"/>
</dbReference>
<dbReference type="InterPro" id="IPR051301">
    <property type="entry name" value="Optineurin/NFkB_EssMod"/>
</dbReference>
<dbReference type="PANTHER" id="PTHR31553">
    <property type="entry name" value="NF-KAPPA-B ESSENTIAL MODULATOR"/>
    <property type="match status" value="1"/>
</dbReference>
<dbReference type="PANTHER" id="PTHR31553:SF3">
    <property type="entry name" value="NF-KAPPA-B ESSENTIAL MODULATOR"/>
    <property type="match status" value="1"/>
</dbReference>
<dbReference type="Pfam" id="PF16516">
    <property type="entry name" value="CC2-LZ"/>
    <property type="match status" value="1"/>
</dbReference>
<dbReference type="Pfam" id="PF11577">
    <property type="entry name" value="NEMO"/>
    <property type="match status" value="1"/>
</dbReference>
<dbReference type="Pfam" id="PF18414">
    <property type="entry name" value="zf_C2H2_10"/>
    <property type="match status" value="1"/>
</dbReference>
<dbReference type="PROSITE" id="PS51801">
    <property type="entry name" value="ZF_CCHC_NOA"/>
    <property type="match status" value="1"/>
</dbReference>
<keyword id="KW-0175">Coiled coil</keyword>
<keyword id="KW-0963">Cytoplasm</keyword>
<keyword id="KW-1015">Disulfide bond</keyword>
<keyword id="KW-0227">DNA damage</keyword>
<keyword id="KW-1017">Isopeptide bond</keyword>
<keyword id="KW-0418">Kinase</keyword>
<keyword id="KW-0479">Metal-binding</keyword>
<keyword id="KW-0539">Nucleus</keyword>
<keyword id="KW-0597">Phosphoprotein</keyword>
<keyword id="KW-1185">Reference proteome</keyword>
<keyword id="KW-0804">Transcription</keyword>
<keyword id="KW-0805">Transcription regulation</keyword>
<keyword id="KW-0808">Transferase</keyword>
<keyword id="KW-0832">Ubl conjugation</keyword>
<keyword id="KW-0862">Zinc</keyword>
<keyword id="KW-0863">Zinc-finger</keyword>
<organism>
    <name type="scientific">Sus scrofa</name>
    <name type="common">Pig</name>
    <dbReference type="NCBI Taxonomy" id="9823"/>
    <lineage>
        <taxon>Eukaryota</taxon>
        <taxon>Metazoa</taxon>
        <taxon>Chordata</taxon>
        <taxon>Craniata</taxon>
        <taxon>Vertebrata</taxon>
        <taxon>Euteleostomi</taxon>
        <taxon>Mammalia</taxon>
        <taxon>Eutheria</taxon>
        <taxon>Laurasiatheria</taxon>
        <taxon>Artiodactyla</taxon>
        <taxon>Suina</taxon>
        <taxon>Suidae</taxon>
        <taxon>Sus</taxon>
    </lineage>
</organism>
<proteinExistence type="evidence at protein level"/>
<sequence length="419" mass="48637">MSRTPWKSQPCEMVQPSGGPAGDQDVLGEESSLGKPTMLHLPSEQGAPETFQRCLEENQELRDAIRQSNQMLRERCEELQRFQGSQREEKEFLMQKFCEARRLVERLSLEKLELRRQREQALQEVELLKTCQQQMAEDKASVKAQVTSLLGELQESQSRLEAATKERQALESRVRATSEQVRQLENEREALQQQHSVQVDQLRLQSQSMEAALRMERQAASEEKRKLAQLQVAYHQLFQEYDNHIKSSVVSSERNRGLQLEDLKQQLQQAEEALVAKQEVIDKLKEEAEQHKIVMETVPVLKAQADIYKADFQAERQAREQLAERKELLQEQLEQLQREYSRLKTSCQESARIEDMRKRHVEVSQPTLPPAPAHHSFHPALPSQRRSPPEEPPNFCCPKCQYQAPDMDTLQIHVMECIE</sequence>
<protein>
    <recommendedName>
        <fullName>NF-kappa-B essential modulator</fullName>
        <shortName>NEMO</shortName>
    </recommendedName>
    <alternativeName>
        <fullName>FIP-3</fullName>
    </alternativeName>
    <alternativeName>
        <fullName>IkB kinase-associated protein 1</fullName>
        <shortName>IKKAP1</shortName>
    </alternativeName>
    <alternativeName>
        <fullName>Inhibitor of nuclear factor kappa-B kinase subunit gamma</fullName>
        <shortName>I-kappa-B kinase subunit gamma</shortName>
        <shortName>IKK-gamma</shortName>
        <shortName>IKKG</shortName>
        <shortName>IkB kinase subunit gamma</shortName>
    </alternativeName>
    <alternativeName>
        <fullName>NF-kappa-B essential modifier</fullName>
    </alternativeName>
</protein>